<proteinExistence type="inferred from homology"/>
<keyword id="KW-0665">Pyrimidine biosynthesis</keyword>
<keyword id="KW-0808">Transferase</keyword>
<accession>A1RTF7</accession>
<reference key="1">
    <citation type="submission" date="2006-12" db="EMBL/GenBank/DDBJ databases">
        <title>Complete sequence of Pyrobaculum islandicum DSM 4184.</title>
        <authorList>
            <person name="Copeland A."/>
            <person name="Lucas S."/>
            <person name="Lapidus A."/>
            <person name="Barry K."/>
            <person name="Detter J.C."/>
            <person name="Glavina del Rio T."/>
            <person name="Dalin E."/>
            <person name="Tice H."/>
            <person name="Pitluck S."/>
            <person name="Meincke L."/>
            <person name="Brettin T."/>
            <person name="Bruce D."/>
            <person name="Han C."/>
            <person name="Tapia R."/>
            <person name="Gilna P."/>
            <person name="Schmutz J."/>
            <person name="Larimer F."/>
            <person name="Land M."/>
            <person name="Hauser L."/>
            <person name="Kyrpides N."/>
            <person name="Mikhailova N."/>
            <person name="Cozen A.E."/>
            <person name="Fitz-Gibbon S.T."/>
            <person name="House C.H."/>
            <person name="Saltikov C."/>
            <person name="Lowe T."/>
            <person name="Richardson P."/>
        </authorList>
    </citation>
    <scope>NUCLEOTIDE SEQUENCE [LARGE SCALE GENOMIC DNA]</scope>
    <source>
        <strain>DSM 4184 / JCM 9189 / GEO3</strain>
    </source>
</reference>
<dbReference type="EC" id="2.1.3.2" evidence="1"/>
<dbReference type="EMBL" id="CP000504">
    <property type="protein sequence ID" value="ABL88239.1"/>
    <property type="molecule type" value="Genomic_DNA"/>
</dbReference>
<dbReference type="RefSeq" id="WP_011762814.1">
    <property type="nucleotide sequence ID" value="NC_008701.1"/>
</dbReference>
<dbReference type="SMR" id="A1RTF7"/>
<dbReference type="STRING" id="384616.Pisl_1066"/>
<dbReference type="GeneID" id="4616772"/>
<dbReference type="KEGG" id="pis:Pisl_1066"/>
<dbReference type="eggNOG" id="arCOG00911">
    <property type="taxonomic scope" value="Archaea"/>
</dbReference>
<dbReference type="HOGENOM" id="CLU_043846_1_2_2"/>
<dbReference type="OrthoDB" id="7792at2157"/>
<dbReference type="UniPathway" id="UPA00070">
    <property type="reaction ID" value="UER00116"/>
</dbReference>
<dbReference type="Proteomes" id="UP000002595">
    <property type="component" value="Chromosome"/>
</dbReference>
<dbReference type="GO" id="GO:0016597">
    <property type="term" value="F:amino acid binding"/>
    <property type="evidence" value="ECO:0007669"/>
    <property type="project" value="InterPro"/>
</dbReference>
<dbReference type="GO" id="GO:0004070">
    <property type="term" value="F:aspartate carbamoyltransferase activity"/>
    <property type="evidence" value="ECO:0007669"/>
    <property type="project" value="UniProtKB-UniRule"/>
</dbReference>
<dbReference type="GO" id="GO:0006207">
    <property type="term" value="P:'de novo' pyrimidine nucleobase biosynthetic process"/>
    <property type="evidence" value="ECO:0007669"/>
    <property type="project" value="InterPro"/>
</dbReference>
<dbReference type="GO" id="GO:0044205">
    <property type="term" value="P:'de novo' UMP biosynthetic process"/>
    <property type="evidence" value="ECO:0007669"/>
    <property type="project" value="UniProtKB-UniRule"/>
</dbReference>
<dbReference type="GO" id="GO:0006520">
    <property type="term" value="P:amino acid metabolic process"/>
    <property type="evidence" value="ECO:0007669"/>
    <property type="project" value="InterPro"/>
</dbReference>
<dbReference type="FunFam" id="3.40.50.1370:FF:000001">
    <property type="entry name" value="Aspartate carbamoyltransferase"/>
    <property type="match status" value="1"/>
</dbReference>
<dbReference type="FunFam" id="3.40.50.1370:FF:000002">
    <property type="entry name" value="Aspartate carbamoyltransferase 2"/>
    <property type="match status" value="1"/>
</dbReference>
<dbReference type="Gene3D" id="3.40.50.1370">
    <property type="entry name" value="Aspartate/ornithine carbamoyltransferase"/>
    <property type="match status" value="2"/>
</dbReference>
<dbReference type="HAMAP" id="MF_00001">
    <property type="entry name" value="Asp_carb_tr"/>
    <property type="match status" value="1"/>
</dbReference>
<dbReference type="InterPro" id="IPR006132">
    <property type="entry name" value="Asp/Orn_carbamoyltranf_P-bd"/>
</dbReference>
<dbReference type="InterPro" id="IPR006130">
    <property type="entry name" value="Asp/Orn_carbamoylTrfase"/>
</dbReference>
<dbReference type="InterPro" id="IPR036901">
    <property type="entry name" value="Asp/Orn_carbamoylTrfase_sf"/>
</dbReference>
<dbReference type="InterPro" id="IPR002082">
    <property type="entry name" value="Asp_carbamoyltransf"/>
</dbReference>
<dbReference type="InterPro" id="IPR006131">
    <property type="entry name" value="Asp_carbamoyltransf_Asp/Orn-bd"/>
</dbReference>
<dbReference type="NCBIfam" id="TIGR00670">
    <property type="entry name" value="asp_carb_tr"/>
    <property type="match status" value="1"/>
</dbReference>
<dbReference type="NCBIfam" id="NF002032">
    <property type="entry name" value="PRK00856.1"/>
    <property type="match status" value="1"/>
</dbReference>
<dbReference type="PANTHER" id="PTHR45753:SF6">
    <property type="entry name" value="ASPARTATE CARBAMOYLTRANSFERASE"/>
    <property type="match status" value="1"/>
</dbReference>
<dbReference type="PANTHER" id="PTHR45753">
    <property type="entry name" value="ORNITHINE CARBAMOYLTRANSFERASE, MITOCHONDRIAL"/>
    <property type="match status" value="1"/>
</dbReference>
<dbReference type="Pfam" id="PF00185">
    <property type="entry name" value="OTCace"/>
    <property type="match status" value="1"/>
</dbReference>
<dbReference type="Pfam" id="PF02729">
    <property type="entry name" value="OTCace_N"/>
    <property type="match status" value="1"/>
</dbReference>
<dbReference type="PRINTS" id="PR00100">
    <property type="entry name" value="AOTCASE"/>
</dbReference>
<dbReference type="PRINTS" id="PR00101">
    <property type="entry name" value="ATCASE"/>
</dbReference>
<dbReference type="SUPFAM" id="SSF53671">
    <property type="entry name" value="Aspartate/ornithine carbamoyltransferase"/>
    <property type="match status" value="1"/>
</dbReference>
<dbReference type="PROSITE" id="PS00097">
    <property type="entry name" value="CARBAMOYLTRANSFERASE"/>
    <property type="match status" value="1"/>
</dbReference>
<protein>
    <recommendedName>
        <fullName evidence="1">Aspartate carbamoyltransferase catalytic subunit</fullName>
        <ecNumber evidence="1">2.1.3.2</ecNumber>
    </recommendedName>
    <alternativeName>
        <fullName evidence="1">Aspartate transcarbamylase</fullName>
        <shortName evidence="1">ATCase</shortName>
    </alternativeName>
</protein>
<feature type="chain" id="PRO_0000321192" description="Aspartate carbamoyltransferase catalytic subunit">
    <location>
        <begin position="1"/>
        <end position="304"/>
    </location>
</feature>
<feature type="binding site" evidence="1">
    <location>
        <position position="54"/>
    </location>
    <ligand>
        <name>carbamoyl phosphate</name>
        <dbReference type="ChEBI" id="CHEBI:58228"/>
    </ligand>
</feature>
<feature type="binding site" evidence="1">
    <location>
        <position position="55"/>
    </location>
    <ligand>
        <name>carbamoyl phosphate</name>
        <dbReference type="ChEBI" id="CHEBI:58228"/>
    </ligand>
</feature>
<feature type="binding site" evidence="1">
    <location>
        <position position="83"/>
    </location>
    <ligand>
        <name>L-aspartate</name>
        <dbReference type="ChEBI" id="CHEBI:29991"/>
    </ligand>
</feature>
<feature type="binding site" evidence="1">
    <location>
        <position position="104"/>
    </location>
    <ligand>
        <name>carbamoyl phosphate</name>
        <dbReference type="ChEBI" id="CHEBI:58228"/>
    </ligand>
</feature>
<feature type="binding site" evidence="1">
    <location>
        <position position="132"/>
    </location>
    <ligand>
        <name>carbamoyl phosphate</name>
        <dbReference type="ChEBI" id="CHEBI:58228"/>
    </ligand>
</feature>
<feature type="binding site" evidence="1">
    <location>
        <position position="135"/>
    </location>
    <ligand>
        <name>carbamoyl phosphate</name>
        <dbReference type="ChEBI" id="CHEBI:58228"/>
    </ligand>
</feature>
<feature type="binding site" evidence="1">
    <location>
        <position position="165"/>
    </location>
    <ligand>
        <name>L-aspartate</name>
        <dbReference type="ChEBI" id="CHEBI:29991"/>
    </ligand>
</feature>
<feature type="binding site" evidence="1">
    <location>
        <position position="226"/>
    </location>
    <ligand>
        <name>L-aspartate</name>
        <dbReference type="ChEBI" id="CHEBI:29991"/>
    </ligand>
</feature>
<feature type="binding site" evidence="1">
    <location>
        <position position="265"/>
    </location>
    <ligand>
        <name>carbamoyl phosphate</name>
        <dbReference type="ChEBI" id="CHEBI:58228"/>
    </ligand>
</feature>
<feature type="binding site" evidence="1">
    <location>
        <position position="266"/>
    </location>
    <ligand>
        <name>carbamoyl phosphate</name>
        <dbReference type="ChEBI" id="CHEBI:58228"/>
    </ligand>
</feature>
<organism>
    <name type="scientific">Pyrobaculum islandicum (strain DSM 4184 / JCM 9189 / GEO3)</name>
    <dbReference type="NCBI Taxonomy" id="384616"/>
    <lineage>
        <taxon>Archaea</taxon>
        <taxon>Thermoproteota</taxon>
        <taxon>Thermoprotei</taxon>
        <taxon>Thermoproteales</taxon>
        <taxon>Thermoproteaceae</taxon>
        <taxon>Pyrobaculum</taxon>
    </lineage>
</organism>
<name>PYRB_PYRIL</name>
<gene>
    <name evidence="1" type="primary">pyrB</name>
    <name type="ordered locus">Pisl_1066</name>
</gene>
<sequence length="304" mass="34930">MWRGRDVISARDFNRVDLEELFEMAKYMEKYAKSRVEFLKGKIMAVAFFEPSTRTRLSFEVAMKRLGGDVIGFWGAEGTSVEKGETLADTIRMLDAYSDIIVIRHKYEGAAKLAAEVAESPVINAGDGAYNHPTQAMLDVYTIWREFGTVDGLNIGLLGDLRHARTINSLLEILTNFKVRVYLISPELLRPRVETINYIQSRGLMLSFHTNIEEVIHELDVVYVVRIQKERFIDPLEYERIKGSYKITLDTLKNVKKNLIILHPLPRVDEIDHRVDSTPYAKYFRQAAFGVPLRMALLYLILQP</sequence>
<comment type="function">
    <text evidence="1">Catalyzes the condensation of carbamoyl phosphate and aspartate to form carbamoyl aspartate and inorganic phosphate, the committed step in the de novo pyrimidine nucleotide biosynthesis pathway.</text>
</comment>
<comment type="catalytic activity">
    <reaction evidence="1">
        <text>carbamoyl phosphate + L-aspartate = N-carbamoyl-L-aspartate + phosphate + H(+)</text>
        <dbReference type="Rhea" id="RHEA:20013"/>
        <dbReference type="ChEBI" id="CHEBI:15378"/>
        <dbReference type="ChEBI" id="CHEBI:29991"/>
        <dbReference type="ChEBI" id="CHEBI:32814"/>
        <dbReference type="ChEBI" id="CHEBI:43474"/>
        <dbReference type="ChEBI" id="CHEBI:58228"/>
        <dbReference type="EC" id="2.1.3.2"/>
    </reaction>
</comment>
<comment type="pathway">
    <text evidence="1">Pyrimidine metabolism; UMP biosynthesis via de novo pathway; (S)-dihydroorotate from bicarbonate: step 2/3.</text>
</comment>
<comment type="subunit">
    <text evidence="1">Heterooligomer of catalytic and regulatory chains.</text>
</comment>
<comment type="similarity">
    <text evidence="1">Belongs to the aspartate/ornithine carbamoyltransferase superfamily. ATCase family.</text>
</comment>
<evidence type="ECO:0000255" key="1">
    <source>
        <dbReference type="HAMAP-Rule" id="MF_00001"/>
    </source>
</evidence>